<protein>
    <recommendedName>
        <fullName evidence="1">Arginine--tRNA ligase</fullName>
        <ecNumber evidence="1">6.1.1.19</ecNumber>
    </recommendedName>
    <alternativeName>
        <fullName evidence="1">Arginyl-tRNA synthetase</fullName>
        <shortName evidence="1">ArgRS</shortName>
    </alternativeName>
</protein>
<sequence length="563" mass="63121">MDTKTLIASEIAKVVPELEQDAIFNLLETPKNSDMGDLAFPAFSLAKVLRKAPQMIASELAEQIDESQFEKVVAVGPYINFFLDKAKISSQVLEQVITAGSDYAQQDEGQGRNVAIDMSSPNIAKPFSIGHLRSTVIGDSLAHIFAKMGYKPVKINHLGDWGKQFGMLIVAYKKWGDEAAVQAHPIDELLKLYVRINAEAETDPTVDEEAREWFRKLEDGDKEATELWQWFRDESLLEFNRLYDQLHVTFDSYNGEAFYNDKMDEVLDLLEAKNLLVESKGAQVVNLEKYGIEHPALIKKSDGATLYITRDLAAALYRKRTYDFAKSVYVVGNEQAAHFKQLKAVLKEMGYDWSDDMTHVAFGLVTKGGAKLSTRKGNVILLEPTVAEAINRAASQIEAKNPNLADKEAVAHAVGVGAIKFYDLKTDRMNGYDFDLEAMVSFEGETGPYVQYAHARIQSILRKADFTPSATTTYSLADAESWEIIKLIQDFPRIIKRTSDNFEPSIMAKFAINLAQSFNKYYAHTRILDDNSERDNRLALCYATATVLKEALRLLGVDAPNEM</sequence>
<evidence type="ECO:0000255" key="1">
    <source>
        <dbReference type="HAMAP-Rule" id="MF_00123"/>
    </source>
</evidence>
<reference key="1">
    <citation type="journal article" date="2007" name="J. Bacteriol.">
        <title>Complete genome of acute rheumatic fever-associated serotype M5 Streptococcus pyogenes strain Manfredo.</title>
        <authorList>
            <person name="Holden M.T.G."/>
            <person name="Scott A."/>
            <person name="Cherevach I."/>
            <person name="Chillingworth T."/>
            <person name="Churcher C."/>
            <person name="Cronin A."/>
            <person name="Dowd L."/>
            <person name="Feltwell T."/>
            <person name="Hamlin N."/>
            <person name="Holroyd S."/>
            <person name="Jagels K."/>
            <person name="Moule S."/>
            <person name="Mungall K."/>
            <person name="Quail M.A."/>
            <person name="Price C."/>
            <person name="Rabbinowitsch E."/>
            <person name="Sharp S."/>
            <person name="Skelton J."/>
            <person name="Whitehead S."/>
            <person name="Barrell B.G."/>
            <person name="Kehoe M."/>
            <person name="Parkhill J."/>
        </authorList>
    </citation>
    <scope>NUCLEOTIDE SEQUENCE [LARGE SCALE GENOMIC DNA]</scope>
    <source>
        <strain>Manfredo</strain>
    </source>
</reference>
<gene>
    <name evidence="1" type="primary">argS</name>
    <name type="ordered locus">SpyM51783</name>
</gene>
<organism>
    <name type="scientific">Streptococcus pyogenes serotype M5 (strain Manfredo)</name>
    <dbReference type="NCBI Taxonomy" id="160491"/>
    <lineage>
        <taxon>Bacteria</taxon>
        <taxon>Bacillati</taxon>
        <taxon>Bacillota</taxon>
        <taxon>Bacilli</taxon>
        <taxon>Lactobacillales</taxon>
        <taxon>Streptococcaceae</taxon>
        <taxon>Streptococcus</taxon>
    </lineage>
</organism>
<keyword id="KW-0030">Aminoacyl-tRNA synthetase</keyword>
<keyword id="KW-0067">ATP-binding</keyword>
<keyword id="KW-0963">Cytoplasm</keyword>
<keyword id="KW-0436">Ligase</keyword>
<keyword id="KW-0547">Nucleotide-binding</keyword>
<keyword id="KW-0648">Protein biosynthesis</keyword>
<feature type="chain" id="PRO_1000018132" description="Arginine--tRNA ligase">
    <location>
        <begin position="1"/>
        <end position="563"/>
    </location>
</feature>
<feature type="short sequence motif" description="'HIGH' region">
    <location>
        <begin position="121"/>
        <end position="131"/>
    </location>
</feature>
<accession>A2RGX5</accession>
<name>SYR_STRPG</name>
<dbReference type="EC" id="6.1.1.19" evidence="1"/>
<dbReference type="EMBL" id="AM295007">
    <property type="protein sequence ID" value="CAM31107.1"/>
    <property type="molecule type" value="Genomic_DNA"/>
</dbReference>
<dbReference type="RefSeq" id="WP_002991367.1">
    <property type="nucleotide sequence ID" value="NC_009332.1"/>
</dbReference>
<dbReference type="SMR" id="A2RGX5"/>
<dbReference type="KEGG" id="spf:SpyM51783"/>
<dbReference type="HOGENOM" id="CLU_006406_6_1_9"/>
<dbReference type="GO" id="GO:0005737">
    <property type="term" value="C:cytoplasm"/>
    <property type="evidence" value="ECO:0007669"/>
    <property type="project" value="UniProtKB-SubCell"/>
</dbReference>
<dbReference type="GO" id="GO:0004814">
    <property type="term" value="F:arginine-tRNA ligase activity"/>
    <property type="evidence" value="ECO:0007669"/>
    <property type="project" value="UniProtKB-UniRule"/>
</dbReference>
<dbReference type="GO" id="GO:0005524">
    <property type="term" value="F:ATP binding"/>
    <property type="evidence" value="ECO:0007669"/>
    <property type="project" value="UniProtKB-UniRule"/>
</dbReference>
<dbReference type="GO" id="GO:0006420">
    <property type="term" value="P:arginyl-tRNA aminoacylation"/>
    <property type="evidence" value="ECO:0007669"/>
    <property type="project" value="UniProtKB-UniRule"/>
</dbReference>
<dbReference type="CDD" id="cd07956">
    <property type="entry name" value="Anticodon_Ia_Arg"/>
    <property type="match status" value="1"/>
</dbReference>
<dbReference type="CDD" id="cd00671">
    <property type="entry name" value="ArgRS_core"/>
    <property type="match status" value="1"/>
</dbReference>
<dbReference type="FunFam" id="3.40.50.620:FF:000116">
    <property type="entry name" value="Arginine--tRNA ligase"/>
    <property type="match status" value="1"/>
</dbReference>
<dbReference type="FunFam" id="1.10.730.10:FF:000006">
    <property type="entry name" value="Arginyl-tRNA synthetase 2, mitochondrial"/>
    <property type="match status" value="1"/>
</dbReference>
<dbReference type="Gene3D" id="3.30.1360.70">
    <property type="entry name" value="Arginyl tRNA synthetase N-terminal domain"/>
    <property type="match status" value="1"/>
</dbReference>
<dbReference type="Gene3D" id="3.40.50.620">
    <property type="entry name" value="HUPs"/>
    <property type="match status" value="1"/>
</dbReference>
<dbReference type="Gene3D" id="1.10.730.10">
    <property type="entry name" value="Isoleucyl-tRNA Synthetase, Domain 1"/>
    <property type="match status" value="1"/>
</dbReference>
<dbReference type="HAMAP" id="MF_00123">
    <property type="entry name" value="Arg_tRNA_synth"/>
    <property type="match status" value="1"/>
</dbReference>
<dbReference type="InterPro" id="IPR001278">
    <property type="entry name" value="Arg-tRNA-ligase"/>
</dbReference>
<dbReference type="InterPro" id="IPR005148">
    <property type="entry name" value="Arg-tRNA-synth_N"/>
</dbReference>
<dbReference type="InterPro" id="IPR036695">
    <property type="entry name" value="Arg-tRNA-synth_N_sf"/>
</dbReference>
<dbReference type="InterPro" id="IPR035684">
    <property type="entry name" value="ArgRS_core"/>
</dbReference>
<dbReference type="InterPro" id="IPR008909">
    <property type="entry name" value="DALR_anticod-bd"/>
</dbReference>
<dbReference type="InterPro" id="IPR014729">
    <property type="entry name" value="Rossmann-like_a/b/a_fold"/>
</dbReference>
<dbReference type="InterPro" id="IPR009080">
    <property type="entry name" value="tRNAsynth_Ia_anticodon-bd"/>
</dbReference>
<dbReference type="NCBIfam" id="TIGR00456">
    <property type="entry name" value="argS"/>
    <property type="match status" value="1"/>
</dbReference>
<dbReference type="PANTHER" id="PTHR11956:SF5">
    <property type="entry name" value="ARGININE--TRNA LIGASE, CYTOPLASMIC"/>
    <property type="match status" value="1"/>
</dbReference>
<dbReference type="PANTHER" id="PTHR11956">
    <property type="entry name" value="ARGINYL-TRNA SYNTHETASE"/>
    <property type="match status" value="1"/>
</dbReference>
<dbReference type="Pfam" id="PF03485">
    <property type="entry name" value="Arg_tRNA_synt_N"/>
    <property type="match status" value="1"/>
</dbReference>
<dbReference type="Pfam" id="PF05746">
    <property type="entry name" value="DALR_1"/>
    <property type="match status" value="1"/>
</dbReference>
<dbReference type="Pfam" id="PF00750">
    <property type="entry name" value="tRNA-synt_1d"/>
    <property type="match status" value="1"/>
</dbReference>
<dbReference type="PRINTS" id="PR01038">
    <property type="entry name" value="TRNASYNTHARG"/>
</dbReference>
<dbReference type="SMART" id="SM01016">
    <property type="entry name" value="Arg_tRNA_synt_N"/>
    <property type="match status" value="1"/>
</dbReference>
<dbReference type="SMART" id="SM00836">
    <property type="entry name" value="DALR_1"/>
    <property type="match status" value="1"/>
</dbReference>
<dbReference type="SUPFAM" id="SSF47323">
    <property type="entry name" value="Anticodon-binding domain of a subclass of class I aminoacyl-tRNA synthetases"/>
    <property type="match status" value="1"/>
</dbReference>
<dbReference type="SUPFAM" id="SSF55190">
    <property type="entry name" value="Arginyl-tRNA synthetase (ArgRS), N-terminal 'additional' domain"/>
    <property type="match status" value="1"/>
</dbReference>
<dbReference type="SUPFAM" id="SSF52374">
    <property type="entry name" value="Nucleotidylyl transferase"/>
    <property type="match status" value="1"/>
</dbReference>
<comment type="catalytic activity">
    <reaction evidence="1">
        <text>tRNA(Arg) + L-arginine + ATP = L-arginyl-tRNA(Arg) + AMP + diphosphate</text>
        <dbReference type="Rhea" id="RHEA:20301"/>
        <dbReference type="Rhea" id="RHEA-COMP:9658"/>
        <dbReference type="Rhea" id="RHEA-COMP:9673"/>
        <dbReference type="ChEBI" id="CHEBI:30616"/>
        <dbReference type="ChEBI" id="CHEBI:32682"/>
        <dbReference type="ChEBI" id="CHEBI:33019"/>
        <dbReference type="ChEBI" id="CHEBI:78442"/>
        <dbReference type="ChEBI" id="CHEBI:78513"/>
        <dbReference type="ChEBI" id="CHEBI:456215"/>
        <dbReference type="EC" id="6.1.1.19"/>
    </reaction>
</comment>
<comment type="subunit">
    <text evidence="1">Monomer.</text>
</comment>
<comment type="subcellular location">
    <subcellularLocation>
        <location evidence="1">Cytoplasm</location>
    </subcellularLocation>
</comment>
<comment type="similarity">
    <text evidence="1">Belongs to the class-I aminoacyl-tRNA synthetase family.</text>
</comment>
<proteinExistence type="inferred from homology"/>